<name>IF1C_SOLLC</name>
<protein>
    <recommendedName>
        <fullName>Translation initiation factor IF-1, chloroplastic</fullName>
    </recommendedName>
</protein>
<accession>Q94KR9</accession>
<reference key="1">
    <citation type="journal article" date="2001" name="Plant Cell">
        <title>Many parallel losses of infA from chloroplast DNA during angiosperm evolution with multiple independent transfers to the nucleus.</title>
        <authorList>
            <person name="Millen R.S."/>
            <person name="Olmstead R.G."/>
            <person name="Adams K.L."/>
            <person name="Palmer J.D."/>
            <person name="Lao N.T."/>
            <person name="Heggie L."/>
            <person name="Kavanagh T.A."/>
            <person name="Hibberd J.M."/>
            <person name="Gray J.C."/>
            <person name="Morden C.W."/>
            <person name="Calie P.J."/>
            <person name="Jermiin L.S."/>
            <person name="Wolfe K.H."/>
        </authorList>
    </citation>
    <scope>NUCLEOTIDE SEQUENCE [MRNA]</scope>
</reference>
<organism>
    <name type="scientific">Solanum lycopersicum</name>
    <name type="common">Tomato</name>
    <name type="synonym">Lycopersicon esculentum</name>
    <dbReference type="NCBI Taxonomy" id="4081"/>
    <lineage>
        <taxon>Eukaryota</taxon>
        <taxon>Viridiplantae</taxon>
        <taxon>Streptophyta</taxon>
        <taxon>Embryophyta</taxon>
        <taxon>Tracheophyta</taxon>
        <taxon>Spermatophyta</taxon>
        <taxon>Magnoliopsida</taxon>
        <taxon>eudicotyledons</taxon>
        <taxon>Gunneridae</taxon>
        <taxon>Pentapetalae</taxon>
        <taxon>asterids</taxon>
        <taxon>lamiids</taxon>
        <taxon>Solanales</taxon>
        <taxon>Solanaceae</taxon>
        <taxon>Solanoideae</taxon>
        <taxon>Solaneae</taxon>
        <taxon>Solanum</taxon>
        <taxon>Solanum subgen. Lycopersicon</taxon>
    </lineage>
</organism>
<dbReference type="EMBL" id="AF347664">
    <property type="protein sequence ID" value="AAK38868.1"/>
    <property type="molecule type" value="mRNA"/>
</dbReference>
<dbReference type="RefSeq" id="NP_001234573.1">
    <property type="nucleotide sequence ID" value="NM_001247644.2"/>
</dbReference>
<dbReference type="SMR" id="Q94KR9"/>
<dbReference type="STRING" id="4081.Q94KR9"/>
<dbReference type="PaxDb" id="4081-Solyc12g098350.1.1"/>
<dbReference type="EnsemblPlants" id="Solyc12g098350.1.1">
    <property type="protein sequence ID" value="Solyc12g098350.1.1.1"/>
    <property type="gene ID" value="Solyc12g098350.1"/>
</dbReference>
<dbReference type="GeneID" id="543687"/>
<dbReference type="Gramene" id="Solyc12g098350.1.1">
    <property type="protein sequence ID" value="Solyc12g098350.1.1.1"/>
    <property type="gene ID" value="Solyc12g098350.1"/>
</dbReference>
<dbReference type="KEGG" id="sly:543687"/>
<dbReference type="eggNOG" id="ENOG502S8M9">
    <property type="taxonomic scope" value="Eukaryota"/>
</dbReference>
<dbReference type="HOGENOM" id="CLU_120213_0_0_1"/>
<dbReference type="InParanoid" id="Q94KR9"/>
<dbReference type="OMA" id="THEGCIT"/>
<dbReference type="OrthoDB" id="1714886at2759"/>
<dbReference type="Proteomes" id="UP000004994">
    <property type="component" value="Chromosome 12"/>
</dbReference>
<dbReference type="GO" id="GO:0009507">
    <property type="term" value="C:chloroplast"/>
    <property type="evidence" value="ECO:0007669"/>
    <property type="project" value="UniProtKB-SubCell"/>
</dbReference>
<dbReference type="GO" id="GO:0005829">
    <property type="term" value="C:cytosol"/>
    <property type="evidence" value="ECO:0000318"/>
    <property type="project" value="GO_Central"/>
</dbReference>
<dbReference type="GO" id="GO:0043022">
    <property type="term" value="F:ribosome binding"/>
    <property type="evidence" value="ECO:0000318"/>
    <property type="project" value="GO_Central"/>
</dbReference>
<dbReference type="GO" id="GO:0003723">
    <property type="term" value="F:RNA binding"/>
    <property type="evidence" value="ECO:0007669"/>
    <property type="project" value="InterPro"/>
</dbReference>
<dbReference type="GO" id="GO:0003743">
    <property type="term" value="F:translation initiation factor activity"/>
    <property type="evidence" value="ECO:0007669"/>
    <property type="project" value="UniProtKB-KW"/>
</dbReference>
<dbReference type="CDD" id="cd04451">
    <property type="entry name" value="S1_IF1"/>
    <property type="match status" value="1"/>
</dbReference>
<dbReference type="FunFam" id="2.40.50.140:FF:000019">
    <property type="entry name" value="Translation initiation factor IF-1, chloroplastic"/>
    <property type="match status" value="1"/>
</dbReference>
<dbReference type="Gene3D" id="2.40.50.140">
    <property type="entry name" value="Nucleic acid-binding proteins"/>
    <property type="match status" value="1"/>
</dbReference>
<dbReference type="HAMAP" id="MF_00075">
    <property type="entry name" value="IF_1"/>
    <property type="match status" value="1"/>
</dbReference>
<dbReference type="InterPro" id="IPR012340">
    <property type="entry name" value="NA-bd_OB-fold"/>
</dbReference>
<dbReference type="InterPro" id="IPR006196">
    <property type="entry name" value="RNA-binding_domain_S1_IF1"/>
</dbReference>
<dbReference type="InterPro" id="IPR003029">
    <property type="entry name" value="S1_domain"/>
</dbReference>
<dbReference type="InterPro" id="IPR004368">
    <property type="entry name" value="TIF_IF1"/>
</dbReference>
<dbReference type="NCBIfam" id="TIGR00008">
    <property type="entry name" value="infA"/>
    <property type="match status" value="1"/>
</dbReference>
<dbReference type="PANTHER" id="PTHR33370">
    <property type="entry name" value="TRANSLATION INITIATION FACTOR IF-1, CHLOROPLASTIC"/>
    <property type="match status" value="1"/>
</dbReference>
<dbReference type="PANTHER" id="PTHR33370:SF1">
    <property type="entry name" value="TRANSLATION INITIATION FACTOR IF-1, CHLOROPLASTIC"/>
    <property type="match status" value="1"/>
</dbReference>
<dbReference type="Pfam" id="PF01176">
    <property type="entry name" value="eIF-1a"/>
    <property type="match status" value="1"/>
</dbReference>
<dbReference type="SMART" id="SM00316">
    <property type="entry name" value="S1"/>
    <property type="match status" value="1"/>
</dbReference>
<dbReference type="SUPFAM" id="SSF50249">
    <property type="entry name" value="Nucleic acid-binding proteins"/>
    <property type="match status" value="1"/>
</dbReference>
<dbReference type="PROSITE" id="PS50832">
    <property type="entry name" value="S1_IF1_TYPE"/>
    <property type="match status" value="1"/>
</dbReference>
<proteinExistence type="evidence at transcript level"/>
<comment type="function">
    <text evidence="2">One of the essential components for the initiation of protein synthesis. Stabilizes the binding of IF-2 and IF-3 on the 30S subunit to which N-formylmethionyl-tRNA(fMet) subsequently binds. Helps modulate mRNA selection, yielding the 30S pre-initiation complex (PIC). Upon addition of the 50S ribosomal subunit IF-1, IF-2 and IF-3 are released leaving the mature 70S translation initiation complex.</text>
</comment>
<comment type="subunit">
    <text evidence="2">Component of the 30S ribosomal translation pre-initiation complex which assembles on the 30S ribosome in the order IF-2 and IF-3, IF-1 and N-formylmethionyl-tRNA(fMet); mRNA recruitment can occur at any time during PIC assembly.</text>
</comment>
<comment type="subcellular location">
    <subcellularLocation>
        <location evidence="1">Plastid</location>
        <location evidence="1">Chloroplast</location>
    </subcellularLocation>
</comment>
<comment type="similarity">
    <text evidence="5">Belongs to the IF-1 family.</text>
</comment>
<gene>
    <name type="primary">infA</name>
</gene>
<keyword id="KW-0150">Chloroplast</keyword>
<keyword id="KW-0396">Initiation factor</keyword>
<keyword id="KW-0934">Plastid</keyword>
<keyword id="KW-0648">Protein biosynthesis</keyword>
<keyword id="KW-1185">Reference proteome</keyword>
<keyword id="KW-0809">Transit peptide</keyword>
<feature type="transit peptide" description="Chloroplast" evidence="3">
    <location>
        <begin position="1"/>
        <end position="81"/>
    </location>
</feature>
<feature type="chain" id="PRO_0000226955" description="Translation initiation factor IF-1, chloroplastic">
    <location>
        <begin position="82"/>
        <end position="156"/>
    </location>
</feature>
<feature type="domain" description="S1-like">
    <location>
        <begin position="82"/>
        <end position="151"/>
    </location>
</feature>
<feature type="region of interest" description="Disordered" evidence="4">
    <location>
        <begin position="51"/>
        <end position="79"/>
    </location>
</feature>
<feature type="compositionally biased region" description="Low complexity" evidence="4">
    <location>
        <begin position="67"/>
        <end position="76"/>
    </location>
</feature>
<sequence>MASLSWWNPAPATAAMAACSPTPTSCKTSNSLALPRSVFVSKQEELMKQAKSLLVKTQQQSKKKKNNSTNSRRTTSIQCLSQEQKWTHEGSITESLPNGMFRVKLDNADVVLGYISGKIRKNFIRLLPGDRVKIEVSRYDSSKGRIIYRLRGGREG</sequence>
<evidence type="ECO:0000250" key="1"/>
<evidence type="ECO:0000250" key="2">
    <source>
        <dbReference type="UniProtKB" id="P69222"/>
    </source>
</evidence>
<evidence type="ECO:0000255" key="3"/>
<evidence type="ECO:0000256" key="4">
    <source>
        <dbReference type="SAM" id="MobiDB-lite"/>
    </source>
</evidence>
<evidence type="ECO:0000305" key="5"/>